<keyword id="KW-1003">Cell membrane</keyword>
<keyword id="KW-0472">Membrane</keyword>
<keyword id="KW-1185">Reference proteome</keyword>
<keyword id="KW-0812">Transmembrane</keyword>
<keyword id="KW-1133">Transmembrane helix</keyword>
<evidence type="ECO:0000255" key="1"/>
<evidence type="ECO:0000255" key="2">
    <source>
        <dbReference type="PROSITE-ProRule" id="PRU00099"/>
    </source>
</evidence>
<evidence type="ECO:0000255" key="3">
    <source>
        <dbReference type="PROSITE-ProRule" id="PRU00102"/>
    </source>
</evidence>
<evidence type="ECO:0000256" key="4">
    <source>
        <dbReference type="SAM" id="MobiDB-lite"/>
    </source>
</evidence>
<evidence type="ECO:0000305" key="5"/>
<organism>
    <name type="scientific">Mycobacterium tuberculosis (strain ATCC 25618 / H37Rv)</name>
    <dbReference type="NCBI Taxonomy" id="83332"/>
    <lineage>
        <taxon>Bacteria</taxon>
        <taxon>Bacillati</taxon>
        <taxon>Actinomycetota</taxon>
        <taxon>Actinomycetes</taxon>
        <taxon>Mycobacteriales</taxon>
        <taxon>Mycobacteriaceae</taxon>
        <taxon>Mycobacterium</taxon>
        <taxon>Mycobacterium tuberculosis complex</taxon>
    </lineage>
</organism>
<name>Y1320_MYCTU</name>
<sequence length="567" mass="61965">MPSEKATTRHLPGAVETLSPRTGRRPETPAYGSWLLGRVSESPRMRRVRIQGMLTVAILVTNVIGLIVGAMLLTVAFPKPSVILDAPHWVSFGIVPGYCVLAFILGTYWLTRQTARALRWAIEERTPSHDEARSAFLVPLRVALAVLFLWGAAAALWTIIYGLANRLFIPRFLFSMGVIGVVAATSCYLLTEFALRPMAAQALEVGATPRSLVRGIVGRTMLVWLLCSGVPNVGVALTAIFDDTFWELSNDQFMITVLILWAPLLIFGFILMWILAWLTATPVRVVREALNRVEQGDLSGDLVVFDGTELGELQRGFNRMVEGLRERERVRDLFGRHVGREVAAAAERERPKLGGEERHVAVVFVDIVGSTQLVTSRPAAEVVMLLNRFFTVIVDEVNHHRGLVNKFQGDASLAVFGAPNRLSHPEDAALATARAIADRLASEMPECQAGIGVAAGQVVAGNVGAHERFEYTVIGEPVNEAARLCELAKSYPSRLLASSQTLRGASENECARWSLGETVTLRGHDQPIRLTSPVQQLQMPAQSADIVGGALGDHQTHTIYRGAHPTD</sequence>
<feature type="chain" id="PRO_0000195756" description="Uncharacterized protein Rv1320c">
    <location>
        <begin position="1"/>
        <end position="567"/>
    </location>
</feature>
<feature type="transmembrane region" description="Helical" evidence="1">
    <location>
        <begin position="57"/>
        <end position="77"/>
    </location>
</feature>
<feature type="transmembrane region" description="Helical" evidence="1">
    <location>
        <begin position="90"/>
        <end position="110"/>
    </location>
</feature>
<feature type="transmembrane region" description="Helical" evidence="1">
    <location>
        <begin position="142"/>
        <end position="162"/>
    </location>
</feature>
<feature type="transmembrane region" description="Helical" evidence="1">
    <location>
        <begin position="173"/>
        <end position="193"/>
    </location>
</feature>
<feature type="transmembrane region" description="Helical" evidence="1">
    <location>
        <begin position="221"/>
        <end position="241"/>
    </location>
</feature>
<feature type="transmembrane region" description="Helical" evidence="1">
    <location>
        <begin position="257"/>
        <end position="277"/>
    </location>
</feature>
<feature type="domain" description="HAMP" evidence="3">
    <location>
        <begin position="278"/>
        <end position="329"/>
    </location>
</feature>
<feature type="domain" description="Guanylate cyclase" evidence="2">
    <location>
        <begin position="361"/>
        <end position="485"/>
    </location>
</feature>
<feature type="region of interest" description="Disordered" evidence="4">
    <location>
        <begin position="1"/>
        <end position="26"/>
    </location>
</feature>
<accession>P9WQ29</accession>
<accession>L0T6I3</accession>
<accession>Q10633</accession>
<gene>
    <name type="ordered locus">Rv1320c</name>
    <name type="ORF">MTCY130.05c</name>
</gene>
<protein>
    <recommendedName>
        <fullName>Uncharacterized protein Rv1320c</fullName>
    </recommendedName>
</protein>
<proteinExistence type="evidence at protein level"/>
<reference key="1">
    <citation type="journal article" date="1998" name="Nature">
        <title>Deciphering the biology of Mycobacterium tuberculosis from the complete genome sequence.</title>
        <authorList>
            <person name="Cole S.T."/>
            <person name="Brosch R."/>
            <person name="Parkhill J."/>
            <person name="Garnier T."/>
            <person name="Churcher C.M."/>
            <person name="Harris D.E."/>
            <person name="Gordon S.V."/>
            <person name="Eiglmeier K."/>
            <person name="Gas S."/>
            <person name="Barry C.E. III"/>
            <person name="Tekaia F."/>
            <person name="Badcock K."/>
            <person name="Basham D."/>
            <person name="Brown D."/>
            <person name="Chillingworth T."/>
            <person name="Connor R."/>
            <person name="Davies R.M."/>
            <person name="Devlin K."/>
            <person name="Feltwell T."/>
            <person name="Gentles S."/>
            <person name="Hamlin N."/>
            <person name="Holroyd S."/>
            <person name="Hornsby T."/>
            <person name="Jagels K."/>
            <person name="Krogh A."/>
            <person name="McLean J."/>
            <person name="Moule S."/>
            <person name="Murphy L.D."/>
            <person name="Oliver S."/>
            <person name="Osborne J."/>
            <person name="Quail M.A."/>
            <person name="Rajandream M.A."/>
            <person name="Rogers J."/>
            <person name="Rutter S."/>
            <person name="Seeger K."/>
            <person name="Skelton S."/>
            <person name="Squares S."/>
            <person name="Squares R."/>
            <person name="Sulston J.E."/>
            <person name="Taylor K."/>
            <person name="Whitehead S."/>
            <person name="Barrell B.G."/>
        </authorList>
    </citation>
    <scope>NUCLEOTIDE SEQUENCE [LARGE SCALE GENOMIC DNA]</scope>
    <source>
        <strain>ATCC 25618 / H37Rv</strain>
    </source>
</reference>
<reference key="2">
    <citation type="journal article" date="2011" name="Mol. Cell. Proteomics">
        <title>Proteogenomic analysis of Mycobacterium tuberculosis by high resolution mass spectrometry.</title>
        <authorList>
            <person name="Kelkar D.S."/>
            <person name="Kumar D."/>
            <person name="Kumar P."/>
            <person name="Balakrishnan L."/>
            <person name="Muthusamy B."/>
            <person name="Yadav A.K."/>
            <person name="Shrivastava P."/>
            <person name="Marimuthu A."/>
            <person name="Anand S."/>
            <person name="Sundaram H."/>
            <person name="Kingsbury R."/>
            <person name="Harsha H.C."/>
            <person name="Nair B."/>
            <person name="Prasad T.S."/>
            <person name="Chauhan D.S."/>
            <person name="Katoch K."/>
            <person name="Katoch V.M."/>
            <person name="Kumar P."/>
            <person name="Chaerkady R."/>
            <person name="Ramachandran S."/>
            <person name="Dash D."/>
            <person name="Pandey A."/>
        </authorList>
    </citation>
    <scope>IDENTIFICATION BY MASS SPECTROMETRY [LARGE SCALE ANALYSIS]</scope>
    <source>
        <strain>ATCC 25618 / H37Rv</strain>
    </source>
</reference>
<dbReference type="EMBL" id="AL123456">
    <property type="protein sequence ID" value="CCP44077.1"/>
    <property type="molecule type" value="Genomic_DNA"/>
</dbReference>
<dbReference type="PIR" id="D70769">
    <property type="entry name" value="D70769"/>
</dbReference>
<dbReference type="RefSeq" id="NP_215836.1">
    <property type="nucleotide sequence ID" value="NC_000962.3"/>
</dbReference>
<dbReference type="RefSeq" id="WP_009935613.1">
    <property type="nucleotide sequence ID" value="NZ_NVQJ01000059.1"/>
</dbReference>
<dbReference type="SMR" id="P9WQ29"/>
<dbReference type="FunCoup" id="P9WQ29">
    <property type="interactions" value="3"/>
</dbReference>
<dbReference type="STRING" id="83332.Rv1320c"/>
<dbReference type="PaxDb" id="83332-Rv1320c"/>
<dbReference type="DNASU" id="886906"/>
<dbReference type="GeneID" id="886906"/>
<dbReference type="KEGG" id="mtu:Rv1320c"/>
<dbReference type="KEGG" id="mtv:RVBD_1320c"/>
<dbReference type="TubercuList" id="Rv1320c"/>
<dbReference type="eggNOG" id="COG2114">
    <property type="taxonomic scope" value="Bacteria"/>
</dbReference>
<dbReference type="eggNOG" id="COG2972">
    <property type="taxonomic scope" value="Bacteria"/>
</dbReference>
<dbReference type="InParanoid" id="P9WQ29"/>
<dbReference type="OrthoDB" id="368920at2"/>
<dbReference type="PhylomeDB" id="P9WQ29"/>
<dbReference type="BRENDA" id="4.6.1.1">
    <property type="organism ID" value="25548"/>
</dbReference>
<dbReference type="Proteomes" id="UP000001584">
    <property type="component" value="Chromosome"/>
</dbReference>
<dbReference type="GO" id="GO:0005829">
    <property type="term" value="C:cytosol"/>
    <property type="evidence" value="ECO:0007005"/>
    <property type="project" value="MTBBASE"/>
</dbReference>
<dbReference type="GO" id="GO:0009274">
    <property type="term" value="C:peptidoglycan-based cell wall"/>
    <property type="evidence" value="ECO:0007005"/>
    <property type="project" value="MTBBASE"/>
</dbReference>
<dbReference type="GO" id="GO:0005886">
    <property type="term" value="C:plasma membrane"/>
    <property type="evidence" value="ECO:0007005"/>
    <property type="project" value="MTBBASE"/>
</dbReference>
<dbReference type="GO" id="GO:0004016">
    <property type="term" value="F:adenylate cyclase activity"/>
    <property type="evidence" value="ECO:0000314"/>
    <property type="project" value="MTBBASE"/>
</dbReference>
<dbReference type="GO" id="GO:0006171">
    <property type="term" value="P:cAMP biosynthetic process"/>
    <property type="evidence" value="ECO:0000318"/>
    <property type="project" value="GO_Central"/>
</dbReference>
<dbReference type="GO" id="GO:0035556">
    <property type="term" value="P:intracellular signal transduction"/>
    <property type="evidence" value="ECO:0007669"/>
    <property type="project" value="InterPro"/>
</dbReference>
<dbReference type="CDD" id="cd07302">
    <property type="entry name" value="CHD"/>
    <property type="match status" value="1"/>
</dbReference>
<dbReference type="CDD" id="cd06225">
    <property type="entry name" value="HAMP"/>
    <property type="match status" value="1"/>
</dbReference>
<dbReference type="FunFam" id="3.30.70.1230:FF:000016">
    <property type="entry name" value="Adenylate/guanylate cyclase domain-containing protein"/>
    <property type="match status" value="1"/>
</dbReference>
<dbReference type="Gene3D" id="6.10.340.10">
    <property type="match status" value="1"/>
</dbReference>
<dbReference type="Gene3D" id="3.30.70.1230">
    <property type="entry name" value="Nucleotide cyclase"/>
    <property type="match status" value="1"/>
</dbReference>
<dbReference type="InterPro" id="IPR001054">
    <property type="entry name" value="A/G_cyclase"/>
</dbReference>
<dbReference type="InterPro" id="IPR050697">
    <property type="entry name" value="Adenylyl/Guanylyl_Cyclase_3/4"/>
</dbReference>
<dbReference type="InterPro" id="IPR003660">
    <property type="entry name" value="HAMP_dom"/>
</dbReference>
<dbReference type="InterPro" id="IPR029787">
    <property type="entry name" value="Nucleotide_cyclase"/>
</dbReference>
<dbReference type="PANTHER" id="PTHR43081">
    <property type="entry name" value="ADENYLATE CYCLASE, TERMINAL-DIFFERENTIATION SPECIFIC-RELATED"/>
    <property type="match status" value="1"/>
</dbReference>
<dbReference type="PANTHER" id="PTHR43081:SF17">
    <property type="entry name" value="BLL5647 PROTEIN"/>
    <property type="match status" value="1"/>
</dbReference>
<dbReference type="Pfam" id="PF00211">
    <property type="entry name" value="Guanylate_cyc"/>
    <property type="match status" value="1"/>
</dbReference>
<dbReference type="Pfam" id="PF00672">
    <property type="entry name" value="HAMP"/>
    <property type="match status" value="1"/>
</dbReference>
<dbReference type="SMART" id="SM00044">
    <property type="entry name" value="CYCc"/>
    <property type="match status" value="1"/>
</dbReference>
<dbReference type="SMART" id="SM00304">
    <property type="entry name" value="HAMP"/>
    <property type="match status" value="1"/>
</dbReference>
<dbReference type="SUPFAM" id="SSF158472">
    <property type="entry name" value="HAMP domain-like"/>
    <property type="match status" value="1"/>
</dbReference>
<dbReference type="SUPFAM" id="SSF55073">
    <property type="entry name" value="Nucleotide cyclase"/>
    <property type="match status" value="1"/>
</dbReference>
<dbReference type="PROSITE" id="PS50125">
    <property type="entry name" value="GUANYLATE_CYCLASE_2"/>
    <property type="match status" value="1"/>
</dbReference>
<dbReference type="PROSITE" id="PS50885">
    <property type="entry name" value="HAMP"/>
    <property type="match status" value="1"/>
</dbReference>
<comment type="subcellular location">
    <subcellularLocation>
        <location evidence="5">Cell membrane</location>
        <topology evidence="5">Multi-pass membrane protein</topology>
    </subcellularLocation>
</comment>
<comment type="similarity">
    <text evidence="5">Belongs to the adenylyl cyclase class-3 family.</text>
</comment>